<dbReference type="EMBL" id="AAFI02000034">
    <property type="protein sequence ID" value="EAL67506.1"/>
    <property type="status" value="ALT_INIT"/>
    <property type="molecule type" value="Genomic_DNA"/>
</dbReference>
<dbReference type="RefSeq" id="XP_641471.1">
    <property type="nucleotide sequence ID" value="XM_636379.1"/>
</dbReference>
<dbReference type="SMR" id="Q54W64"/>
<dbReference type="FunCoup" id="Q54W64">
    <property type="interactions" value="16"/>
</dbReference>
<dbReference type="PaxDb" id="44689-DDB0218199"/>
<dbReference type="EnsemblProtists" id="EAL67506">
    <property type="protein sequence ID" value="EAL67506"/>
    <property type="gene ID" value="DDB_G0279899"/>
</dbReference>
<dbReference type="GeneID" id="8622270"/>
<dbReference type="KEGG" id="ddi:DDB_G0279899"/>
<dbReference type="dictyBase" id="DDB_G0279899"/>
<dbReference type="VEuPathDB" id="AmoebaDB:DDB_G0279899"/>
<dbReference type="eggNOG" id="ENOG502SWWV">
    <property type="taxonomic scope" value="Eukaryota"/>
</dbReference>
<dbReference type="InParanoid" id="Q54W64"/>
<dbReference type="PhylomeDB" id="Q54W64"/>
<dbReference type="PRO" id="PR:Q54W64"/>
<dbReference type="Proteomes" id="UP000002195">
    <property type="component" value="Chromosome 3"/>
</dbReference>
<dbReference type="GO" id="GO:0008270">
    <property type="term" value="F:zinc ion binding"/>
    <property type="evidence" value="ECO:0007669"/>
    <property type="project" value="UniProtKB-KW"/>
</dbReference>
<dbReference type="CDD" id="cd19756">
    <property type="entry name" value="Bbox2"/>
    <property type="match status" value="1"/>
</dbReference>
<dbReference type="Gene3D" id="3.30.160.60">
    <property type="entry name" value="Classic Zinc Finger"/>
    <property type="match status" value="1"/>
</dbReference>
<dbReference type="InterPro" id="IPR040328">
    <property type="entry name" value="DDB_G0279899-like"/>
</dbReference>
<dbReference type="InterPro" id="IPR008615">
    <property type="entry name" value="FNIP"/>
</dbReference>
<dbReference type="InterPro" id="IPR000315">
    <property type="entry name" value="Znf_B-box"/>
</dbReference>
<dbReference type="PANTHER" id="PTHR31768">
    <property type="entry name" value="B BOX-TYPE DOMAIN-CONTAINING PROTEIN"/>
    <property type="match status" value="1"/>
</dbReference>
<dbReference type="PANTHER" id="PTHR31768:SF3">
    <property type="entry name" value="B BOX-TYPE DOMAIN-CONTAINING PROTEIN-RELATED"/>
    <property type="match status" value="1"/>
</dbReference>
<dbReference type="Pfam" id="PF05725">
    <property type="entry name" value="FNIP"/>
    <property type="match status" value="2"/>
</dbReference>
<dbReference type="Pfam" id="PF00643">
    <property type="entry name" value="zf-B_box"/>
    <property type="match status" value="1"/>
</dbReference>
<dbReference type="SMART" id="SM00336">
    <property type="entry name" value="BBOX"/>
    <property type="match status" value="1"/>
</dbReference>
<dbReference type="SUPFAM" id="SSF57845">
    <property type="entry name" value="B-box zinc-binding domain"/>
    <property type="match status" value="1"/>
</dbReference>
<dbReference type="PROSITE" id="PS50119">
    <property type="entry name" value="ZF_BBOX"/>
    <property type="match status" value="1"/>
</dbReference>
<gene>
    <name type="ORF">DDB_G0279899</name>
</gene>
<sequence length="393" mass="45121">MDSISKYDNKCAIHKEHKIKMICATCKDVVCNECILLDHNGHKFGRIDVENSKEIFEEFKNNHLQNLDKQIGINNELLNESNNLFKSLEDKHTENVNTITEVFKELPKLLPIIEIDKIKQLVTLYDENKDINTNISTIVHDYSNNINLITNKYKNTINQINIDQIINDNNSYQHIEILKHCCQSRLLIKDNQNENKINELMDQYKNVNFVNNSEQVKESIKEIFEISNSLSITNVKDPKRVIAGGKECFIYKNDSIIPNGTTHLAIAPSVKTIKIGSIPTSVKYLVLLDGFNVQLKEGMLPQSITHLFVGAIKKPLLKGSIPNGVTDLSLLDGFNQKITEIPQSTVHLYLFDTPLTNFPFQNFILRTSKYKQQFAHPKVKDWNLSTWEPKIEL</sequence>
<comment type="sequence caution" evidence="2">
    <conflict type="erroneous initiation">
        <sequence resource="EMBL-CDS" id="EAL67506"/>
    </conflict>
    <text>Truncated N-terminus.</text>
</comment>
<evidence type="ECO:0000255" key="1">
    <source>
        <dbReference type="PROSITE-ProRule" id="PRU00024"/>
    </source>
</evidence>
<evidence type="ECO:0000305" key="2"/>
<protein>
    <recommendedName>
        <fullName>Uncharacterized protein DDB_G0279899</fullName>
    </recommendedName>
</protein>
<organism>
    <name type="scientific">Dictyostelium discoideum</name>
    <name type="common">Social amoeba</name>
    <dbReference type="NCBI Taxonomy" id="44689"/>
    <lineage>
        <taxon>Eukaryota</taxon>
        <taxon>Amoebozoa</taxon>
        <taxon>Evosea</taxon>
        <taxon>Eumycetozoa</taxon>
        <taxon>Dictyostelia</taxon>
        <taxon>Dictyosteliales</taxon>
        <taxon>Dictyosteliaceae</taxon>
        <taxon>Dictyostelium</taxon>
    </lineage>
</organism>
<accession>Q54W64</accession>
<feature type="chain" id="PRO_0000406195" description="Uncharacterized protein DDB_G0279899">
    <location>
        <begin position="1"/>
        <end position="393"/>
    </location>
</feature>
<feature type="zinc finger region" description="B box-type" evidence="1">
    <location>
        <begin position="6"/>
        <end position="47"/>
    </location>
</feature>
<feature type="binding site" evidence="1">
    <location>
        <position position="11"/>
    </location>
    <ligand>
        <name>Zn(2+)</name>
        <dbReference type="ChEBI" id="CHEBI:29105"/>
    </ligand>
</feature>
<feature type="binding site" evidence="1">
    <location>
        <position position="14"/>
    </location>
    <ligand>
        <name>Zn(2+)</name>
        <dbReference type="ChEBI" id="CHEBI:29105"/>
    </ligand>
</feature>
<feature type="binding site" evidence="1">
    <location>
        <position position="34"/>
    </location>
    <ligand>
        <name>Zn(2+)</name>
        <dbReference type="ChEBI" id="CHEBI:29105"/>
    </ligand>
</feature>
<feature type="binding site" evidence="1">
    <location>
        <position position="39"/>
    </location>
    <ligand>
        <name>Zn(2+)</name>
        <dbReference type="ChEBI" id="CHEBI:29105"/>
    </ligand>
</feature>
<name>Y9899_DICDI</name>
<proteinExistence type="predicted"/>
<reference key="1">
    <citation type="journal article" date="2005" name="Nature">
        <title>The genome of the social amoeba Dictyostelium discoideum.</title>
        <authorList>
            <person name="Eichinger L."/>
            <person name="Pachebat J.A."/>
            <person name="Gloeckner G."/>
            <person name="Rajandream M.A."/>
            <person name="Sucgang R."/>
            <person name="Berriman M."/>
            <person name="Song J."/>
            <person name="Olsen R."/>
            <person name="Szafranski K."/>
            <person name="Xu Q."/>
            <person name="Tunggal B."/>
            <person name="Kummerfeld S."/>
            <person name="Madera M."/>
            <person name="Konfortov B.A."/>
            <person name="Rivero F."/>
            <person name="Bankier A.T."/>
            <person name="Lehmann R."/>
            <person name="Hamlin N."/>
            <person name="Davies R."/>
            <person name="Gaudet P."/>
            <person name="Fey P."/>
            <person name="Pilcher K."/>
            <person name="Chen G."/>
            <person name="Saunders D."/>
            <person name="Sodergren E.J."/>
            <person name="Davis P."/>
            <person name="Kerhornou A."/>
            <person name="Nie X."/>
            <person name="Hall N."/>
            <person name="Anjard C."/>
            <person name="Hemphill L."/>
            <person name="Bason N."/>
            <person name="Farbrother P."/>
            <person name="Desany B."/>
            <person name="Just E."/>
            <person name="Morio T."/>
            <person name="Rost R."/>
            <person name="Churcher C.M."/>
            <person name="Cooper J."/>
            <person name="Haydock S."/>
            <person name="van Driessche N."/>
            <person name="Cronin A."/>
            <person name="Goodhead I."/>
            <person name="Muzny D.M."/>
            <person name="Mourier T."/>
            <person name="Pain A."/>
            <person name="Lu M."/>
            <person name="Harper D."/>
            <person name="Lindsay R."/>
            <person name="Hauser H."/>
            <person name="James K.D."/>
            <person name="Quiles M."/>
            <person name="Madan Babu M."/>
            <person name="Saito T."/>
            <person name="Buchrieser C."/>
            <person name="Wardroper A."/>
            <person name="Felder M."/>
            <person name="Thangavelu M."/>
            <person name="Johnson D."/>
            <person name="Knights A."/>
            <person name="Loulseged H."/>
            <person name="Mungall K.L."/>
            <person name="Oliver K."/>
            <person name="Price C."/>
            <person name="Quail M.A."/>
            <person name="Urushihara H."/>
            <person name="Hernandez J."/>
            <person name="Rabbinowitsch E."/>
            <person name="Steffen D."/>
            <person name="Sanders M."/>
            <person name="Ma J."/>
            <person name="Kohara Y."/>
            <person name="Sharp S."/>
            <person name="Simmonds M.N."/>
            <person name="Spiegler S."/>
            <person name="Tivey A."/>
            <person name="Sugano S."/>
            <person name="White B."/>
            <person name="Walker D."/>
            <person name="Woodward J.R."/>
            <person name="Winckler T."/>
            <person name="Tanaka Y."/>
            <person name="Shaulsky G."/>
            <person name="Schleicher M."/>
            <person name="Weinstock G.M."/>
            <person name="Rosenthal A."/>
            <person name="Cox E.C."/>
            <person name="Chisholm R.L."/>
            <person name="Gibbs R.A."/>
            <person name="Loomis W.F."/>
            <person name="Platzer M."/>
            <person name="Kay R.R."/>
            <person name="Williams J.G."/>
            <person name="Dear P.H."/>
            <person name="Noegel A.A."/>
            <person name="Barrell B.G."/>
            <person name="Kuspa A."/>
        </authorList>
    </citation>
    <scope>NUCLEOTIDE SEQUENCE [LARGE SCALE GENOMIC DNA]</scope>
    <source>
        <strain>AX4</strain>
    </source>
</reference>
<keyword id="KW-0479">Metal-binding</keyword>
<keyword id="KW-1185">Reference proteome</keyword>
<keyword id="KW-0862">Zinc</keyword>
<keyword id="KW-0863">Zinc-finger</keyword>